<dbReference type="EMBL" id="BA000012">
    <property type="protein sequence ID" value="BAB48222.1"/>
    <property type="molecule type" value="Genomic_DNA"/>
</dbReference>
<dbReference type="RefSeq" id="WP_010909577.1">
    <property type="nucleotide sequence ID" value="NC_002678.2"/>
</dbReference>
<dbReference type="SMR" id="Q98M91"/>
<dbReference type="KEGG" id="mlo:mll0680"/>
<dbReference type="eggNOG" id="COG2220">
    <property type="taxonomic scope" value="Bacteria"/>
</dbReference>
<dbReference type="HOGENOM" id="CLU_070010_4_0_5"/>
<dbReference type="Proteomes" id="UP000000552">
    <property type="component" value="Chromosome"/>
</dbReference>
<dbReference type="GO" id="GO:0016787">
    <property type="term" value="F:hydrolase activity"/>
    <property type="evidence" value="ECO:0007669"/>
    <property type="project" value="UniProtKB-UniRule"/>
</dbReference>
<dbReference type="CDD" id="cd06262">
    <property type="entry name" value="metallo-hydrolase-like_MBL-fold"/>
    <property type="match status" value="1"/>
</dbReference>
<dbReference type="Gene3D" id="3.60.15.10">
    <property type="entry name" value="Ribonuclease Z/Hydroxyacylglutathione hydrolase-like"/>
    <property type="match status" value="1"/>
</dbReference>
<dbReference type="HAMAP" id="MF_00457">
    <property type="entry name" value="UPF0173"/>
    <property type="match status" value="1"/>
</dbReference>
<dbReference type="InterPro" id="IPR001279">
    <property type="entry name" value="Metallo-B-lactamas"/>
</dbReference>
<dbReference type="InterPro" id="IPR036866">
    <property type="entry name" value="RibonucZ/Hydroxyglut_hydro"/>
</dbReference>
<dbReference type="InterPro" id="IPR022877">
    <property type="entry name" value="UPF0173"/>
</dbReference>
<dbReference type="InterPro" id="IPR050114">
    <property type="entry name" value="UPF0173_UPF0282_UlaG_hydrolase"/>
</dbReference>
<dbReference type="NCBIfam" id="NF001911">
    <property type="entry name" value="PRK00685.1"/>
    <property type="match status" value="1"/>
</dbReference>
<dbReference type="PANTHER" id="PTHR43546:SF3">
    <property type="entry name" value="UPF0173 METAL-DEPENDENT HYDROLASE MJ1163"/>
    <property type="match status" value="1"/>
</dbReference>
<dbReference type="PANTHER" id="PTHR43546">
    <property type="entry name" value="UPF0173 METAL-DEPENDENT HYDROLASE MJ1163-RELATED"/>
    <property type="match status" value="1"/>
</dbReference>
<dbReference type="Pfam" id="PF13483">
    <property type="entry name" value="Lactamase_B_3"/>
    <property type="match status" value="1"/>
</dbReference>
<dbReference type="SMART" id="SM00849">
    <property type="entry name" value="Lactamase_B"/>
    <property type="match status" value="1"/>
</dbReference>
<dbReference type="SUPFAM" id="SSF56281">
    <property type="entry name" value="Metallo-hydrolase/oxidoreductase"/>
    <property type="match status" value="1"/>
</dbReference>
<comment type="similarity">
    <text evidence="1">Belongs to the UPF0173 family.</text>
</comment>
<keyword id="KW-0378">Hydrolase</keyword>
<protein>
    <recommendedName>
        <fullName evidence="1">UPF0173 metal-dependent hydrolase mll0680</fullName>
    </recommendedName>
</protein>
<name>Y680_RHILO</name>
<organism>
    <name type="scientific">Mesorhizobium japonicum (strain LMG 29417 / CECT 9101 / MAFF 303099)</name>
    <name type="common">Mesorhizobium loti (strain MAFF 303099)</name>
    <dbReference type="NCBI Taxonomy" id="266835"/>
    <lineage>
        <taxon>Bacteria</taxon>
        <taxon>Pseudomonadati</taxon>
        <taxon>Pseudomonadota</taxon>
        <taxon>Alphaproteobacteria</taxon>
        <taxon>Hyphomicrobiales</taxon>
        <taxon>Phyllobacteriaceae</taxon>
        <taxon>Mesorhizobium</taxon>
    </lineage>
</organism>
<reference key="1">
    <citation type="journal article" date="2000" name="DNA Res.">
        <title>Complete genome structure of the nitrogen-fixing symbiotic bacterium Mesorhizobium loti.</title>
        <authorList>
            <person name="Kaneko T."/>
            <person name="Nakamura Y."/>
            <person name="Sato S."/>
            <person name="Asamizu E."/>
            <person name="Kato T."/>
            <person name="Sasamoto S."/>
            <person name="Watanabe A."/>
            <person name="Idesawa K."/>
            <person name="Ishikawa A."/>
            <person name="Kawashima K."/>
            <person name="Kimura T."/>
            <person name="Kishida Y."/>
            <person name="Kiyokawa C."/>
            <person name="Kohara M."/>
            <person name="Matsumoto M."/>
            <person name="Matsuno A."/>
            <person name="Mochizuki Y."/>
            <person name="Nakayama S."/>
            <person name="Nakazaki N."/>
            <person name="Shimpo S."/>
            <person name="Sugimoto M."/>
            <person name="Takeuchi C."/>
            <person name="Yamada M."/>
            <person name="Tabata S."/>
        </authorList>
    </citation>
    <scope>NUCLEOTIDE SEQUENCE [LARGE SCALE GENOMIC DNA]</scope>
    <source>
        <strain>LMG 29417 / CECT 9101 / MAFF 303099</strain>
    </source>
</reference>
<proteinExistence type="inferred from homology"/>
<accession>Q98M91</accession>
<evidence type="ECO:0000255" key="1">
    <source>
        <dbReference type="HAMAP-Rule" id="MF_00457"/>
    </source>
</evidence>
<sequence>MKLTWYGHSAFRIETGDAKILIDPYLIGNPSWTGGWEGPAEGITHVLLTHGHSDHISGALEVLGKSGAQLVANFEICMYLVGKGADGSKINPGNIGGTVDCGGFTTTFVQALHSSSFGEDGGKNVYLGNPGGLVLHFPEDRTLYHMGDTDIFSDMALINELHEPKIGIVPIGDRFTMGGAVAALACRRFFKFDTVVPCHFGTFPMIDPTPEKFEAGLEGSGVKVALPKIGETITI</sequence>
<gene>
    <name type="ordered locus">mll0680</name>
</gene>
<feature type="chain" id="PRO_0000156379" description="UPF0173 metal-dependent hydrolase mll0680">
    <location>
        <begin position="1"/>
        <end position="235"/>
    </location>
</feature>